<proteinExistence type="inferred from homology"/>
<sequence length="338" mass="38308">MKTDDFDYKLPEELIASYPLENRDASRLLKLNKQTGEIADYKFTDFIDFINPGDLLVFNNSKVMLARLYGSKTTGAKLEYLIERIKNPKLFETHIKANRSPAIGSEIYVESTHAKVLDKDGGMYLLEIQGDKDIYQLMEEFGHIPLPPYMKRDDEEFDAERYQTVYAQDLGSVAAPTAGLHFSKELMQQIKDKGVDIAYITLHVGSGTFKPVQVDDVESHKMHAEVISVPVEVCQKIRQTKENGGRVIAIGTTSVRSLETAGQNGQIEPYQGETDIFLYPGKKFNVVDAMITNFHLPKSTLIMLVSAFADKEKIIKAYEHAIAERYRFFSYGDAMFIF</sequence>
<name>QUEA_FRATM</name>
<reference key="1">
    <citation type="journal article" date="2009" name="PLoS Pathog.">
        <title>Molecular evolutionary consequences of niche restriction in Francisella tularensis, a facultative intracellular pathogen.</title>
        <authorList>
            <person name="Larsson P."/>
            <person name="Elfsmark D."/>
            <person name="Svensson K."/>
            <person name="Wikstroem P."/>
            <person name="Forsman M."/>
            <person name="Brettin T."/>
            <person name="Keim P."/>
            <person name="Johansson A."/>
        </authorList>
    </citation>
    <scope>NUCLEOTIDE SEQUENCE [LARGE SCALE GENOMIC DNA]</scope>
    <source>
        <strain>FSC147</strain>
    </source>
</reference>
<feature type="chain" id="PRO_1000094778" description="S-adenosylmethionine:tRNA ribosyltransferase-isomerase">
    <location>
        <begin position="1"/>
        <end position="338"/>
    </location>
</feature>
<keyword id="KW-0963">Cytoplasm</keyword>
<keyword id="KW-0671">Queuosine biosynthesis</keyword>
<keyword id="KW-0949">S-adenosyl-L-methionine</keyword>
<keyword id="KW-0808">Transferase</keyword>
<dbReference type="EC" id="2.4.99.17" evidence="1"/>
<dbReference type="EMBL" id="CP000915">
    <property type="protein sequence ID" value="ACD30706.1"/>
    <property type="molecule type" value="Genomic_DNA"/>
</dbReference>
<dbReference type="SMR" id="B2SG47"/>
<dbReference type="KEGG" id="ftm:FTM_0728"/>
<dbReference type="HOGENOM" id="CLU_039110_1_0_6"/>
<dbReference type="UniPathway" id="UPA00392"/>
<dbReference type="GO" id="GO:0005737">
    <property type="term" value="C:cytoplasm"/>
    <property type="evidence" value="ECO:0007669"/>
    <property type="project" value="UniProtKB-SubCell"/>
</dbReference>
<dbReference type="GO" id="GO:0051075">
    <property type="term" value="F:S-adenosylmethionine:tRNA ribosyltransferase-isomerase activity"/>
    <property type="evidence" value="ECO:0007669"/>
    <property type="project" value="UniProtKB-EC"/>
</dbReference>
<dbReference type="GO" id="GO:0008616">
    <property type="term" value="P:queuosine biosynthetic process"/>
    <property type="evidence" value="ECO:0007669"/>
    <property type="project" value="UniProtKB-UniRule"/>
</dbReference>
<dbReference type="GO" id="GO:0002099">
    <property type="term" value="P:tRNA wobble guanine modification"/>
    <property type="evidence" value="ECO:0007669"/>
    <property type="project" value="TreeGrafter"/>
</dbReference>
<dbReference type="FunFam" id="3.40.1780.10:FF:000001">
    <property type="entry name" value="S-adenosylmethionine:tRNA ribosyltransferase-isomerase"/>
    <property type="match status" value="1"/>
</dbReference>
<dbReference type="Gene3D" id="2.40.10.240">
    <property type="entry name" value="QueA-like"/>
    <property type="match status" value="1"/>
</dbReference>
<dbReference type="Gene3D" id="3.40.1780.10">
    <property type="entry name" value="QueA-like"/>
    <property type="match status" value="1"/>
</dbReference>
<dbReference type="HAMAP" id="MF_00113">
    <property type="entry name" value="QueA"/>
    <property type="match status" value="1"/>
</dbReference>
<dbReference type="InterPro" id="IPR003699">
    <property type="entry name" value="QueA"/>
</dbReference>
<dbReference type="InterPro" id="IPR042118">
    <property type="entry name" value="QueA_dom1"/>
</dbReference>
<dbReference type="InterPro" id="IPR042119">
    <property type="entry name" value="QueA_dom2"/>
</dbReference>
<dbReference type="InterPro" id="IPR036100">
    <property type="entry name" value="QueA_sf"/>
</dbReference>
<dbReference type="NCBIfam" id="NF001140">
    <property type="entry name" value="PRK00147.1"/>
    <property type="match status" value="1"/>
</dbReference>
<dbReference type="NCBIfam" id="TIGR00113">
    <property type="entry name" value="queA"/>
    <property type="match status" value="1"/>
</dbReference>
<dbReference type="PANTHER" id="PTHR30307">
    <property type="entry name" value="S-ADENOSYLMETHIONINE:TRNA RIBOSYLTRANSFERASE-ISOMERASE"/>
    <property type="match status" value="1"/>
</dbReference>
<dbReference type="PANTHER" id="PTHR30307:SF0">
    <property type="entry name" value="S-ADENOSYLMETHIONINE:TRNA RIBOSYLTRANSFERASE-ISOMERASE"/>
    <property type="match status" value="1"/>
</dbReference>
<dbReference type="Pfam" id="PF02547">
    <property type="entry name" value="Queuosine_synth"/>
    <property type="match status" value="1"/>
</dbReference>
<dbReference type="SUPFAM" id="SSF111337">
    <property type="entry name" value="QueA-like"/>
    <property type="match status" value="1"/>
</dbReference>
<evidence type="ECO:0000255" key="1">
    <source>
        <dbReference type="HAMAP-Rule" id="MF_00113"/>
    </source>
</evidence>
<organism>
    <name type="scientific">Francisella tularensis subsp. mediasiatica (strain FSC147)</name>
    <dbReference type="NCBI Taxonomy" id="441952"/>
    <lineage>
        <taxon>Bacteria</taxon>
        <taxon>Pseudomonadati</taxon>
        <taxon>Pseudomonadota</taxon>
        <taxon>Gammaproteobacteria</taxon>
        <taxon>Thiotrichales</taxon>
        <taxon>Francisellaceae</taxon>
        <taxon>Francisella</taxon>
    </lineage>
</organism>
<protein>
    <recommendedName>
        <fullName evidence="1">S-adenosylmethionine:tRNA ribosyltransferase-isomerase</fullName>
        <ecNumber evidence="1">2.4.99.17</ecNumber>
    </recommendedName>
    <alternativeName>
        <fullName evidence="1">Queuosine biosynthesis protein QueA</fullName>
    </alternativeName>
</protein>
<accession>B2SG47</accession>
<comment type="function">
    <text evidence="1">Transfers and isomerizes the ribose moiety from AdoMet to the 7-aminomethyl group of 7-deazaguanine (preQ1-tRNA) to give epoxyqueuosine (oQ-tRNA).</text>
</comment>
<comment type="catalytic activity">
    <reaction evidence="1">
        <text>7-aminomethyl-7-carbaguanosine(34) in tRNA + S-adenosyl-L-methionine = epoxyqueuosine(34) in tRNA + adenine + L-methionine + 2 H(+)</text>
        <dbReference type="Rhea" id="RHEA:32155"/>
        <dbReference type="Rhea" id="RHEA-COMP:10342"/>
        <dbReference type="Rhea" id="RHEA-COMP:18582"/>
        <dbReference type="ChEBI" id="CHEBI:15378"/>
        <dbReference type="ChEBI" id="CHEBI:16708"/>
        <dbReference type="ChEBI" id="CHEBI:57844"/>
        <dbReference type="ChEBI" id="CHEBI:59789"/>
        <dbReference type="ChEBI" id="CHEBI:82833"/>
        <dbReference type="ChEBI" id="CHEBI:194443"/>
        <dbReference type="EC" id="2.4.99.17"/>
    </reaction>
</comment>
<comment type="pathway">
    <text evidence="1">tRNA modification; tRNA-queuosine biosynthesis.</text>
</comment>
<comment type="subunit">
    <text evidence="1">Monomer.</text>
</comment>
<comment type="subcellular location">
    <subcellularLocation>
        <location evidence="1">Cytoplasm</location>
    </subcellularLocation>
</comment>
<comment type="similarity">
    <text evidence="1">Belongs to the QueA family.</text>
</comment>
<gene>
    <name evidence="1" type="primary">queA</name>
    <name type="ordered locus">FTM_0728</name>
</gene>